<organism>
    <name type="scientific">Staphylococcus aureus (strain MW2)</name>
    <dbReference type="NCBI Taxonomy" id="196620"/>
    <lineage>
        <taxon>Bacteria</taxon>
        <taxon>Bacillati</taxon>
        <taxon>Bacillota</taxon>
        <taxon>Bacilli</taxon>
        <taxon>Bacillales</taxon>
        <taxon>Staphylococcaceae</taxon>
        <taxon>Staphylococcus</taxon>
    </lineage>
</organism>
<accession>P63659</accession>
<accession>Q99SF2</accession>
<evidence type="ECO:0000255" key="1">
    <source>
        <dbReference type="HAMAP-Rule" id="MF_01416"/>
    </source>
</evidence>
<protein>
    <recommendedName>
        <fullName evidence="1">ATP synthase subunit delta</fullName>
    </recommendedName>
    <alternativeName>
        <fullName evidence="1">ATP synthase F(1) sector subunit delta</fullName>
    </alternativeName>
    <alternativeName>
        <fullName evidence="1">F-type ATPase subunit delta</fullName>
        <shortName evidence="1">F-ATPase subunit delta</shortName>
    </alternativeName>
</protein>
<feature type="chain" id="PRO_0000193485" description="ATP synthase subunit delta">
    <location>
        <begin position="1"/>
        <end position="179"/>
    </location>
</feature>
<name>ATPD_STAAW</name>
<gene>
    <name evidence="1" type="primary">atpH</name>
    <name type="ordered locus">MW2030</name>
</gene>
<keyword id="KW-0066">ATP synthesis</keyword>
<keyword id="KW-1003">Cell membrane</keyword>
<keyword id="KW-0139">CF(1)</keyword>
<keyword id="KW-0375">Hydrogen ion transport</keyword>
<keyword id="KW-0406">Ion transport</keyword>
<keyword id="KW-0472">Membrane</keyword>
<keyword id="KW-0813">Transport</keyword>
<comment type="function">
    <text evidence="1">F(1)F(0) ATP synthase produces ATP from ADP in the presence of a proton or sodium gradient. F-type ATPases consist of two structural domains, F(1) containing the extramembraneous catalytic core and F(0) containing the membrane proton channel, linked together by a central stalk and a peripheral stalk. During catalysis, ATP synthesis in the catalytic domain of F(1) is coupled via a rotary mechanism of the central stalk subunits to proton translocation.</text>
</comment>
<comment type="function">
    <text evidence="1">This protein is part of the stalk that links CF(0) to CF(1). It either transmits conformational changes from CF(0) to CF(1) or is implicated in proton conduction.</text>
</comment>
<comment type="subunit">
    <text evidence="1">F-type ATPases have 2 components, F(1) - the catalytic core - and F(0) - the membrane proton channel. F(1) has five subunits: alpha(3), beta(3), gamma(1), delta(1), epsilon(1). F(0) has three main subunits: a(1), b(2) and c(10-14). The alpha and beta chains form an alternating ring which encloses part of the gamma chain. F(1) is attached to F(0) by a central stalk formed by the gamma and epsilon chains, while a peripheral stalk is formed by the delta and b chains.</text>
</comment>
<comment type="subcellular location">
    <subcellularLocation>
        <location evidence="1">Cell membrane</location>
        <topology evidence="1">Peripheral membrane protein</topology>
    </subcellularLocation>
</comment>
<comment type="similarity">
    <text evidence="1">Belongs to the ATPase delta chain family.</text>
</comment>
<reference key="1">
    <citation type="journal article" date="2002" name="Lancet">
        <title>Genome and virulence determinants of high virulence community-acquired MRSA.</title>
        <authorList>
            <person name="Baba T."/>
            <person name="Takeuchi F."/>
            <person name="Kuroda M."/>
            <person name="Yuzawa H."/>
            <person name="Aoki K."/>
            <person name="Oguchi A."/>
            <person name="Nagai Y."/>
            <person name="Iwama N."/>
            <person name="Asano K."/>
            <person name="Naimi T."/>
            <person name="Kuroda H."/>
            <person name="Cui L."/>
            <person name="Yamamoto K."/>
            <person name="Hiramatsu K."/>
        </authorList>
    </citation>
    <scope>NUCLEOTIDE SEQUENCE [LARGE SCALE GENOMIC DNA]</scope>
    <source>
        <strain>MW2</strain>
    </source>
</reference>
<sequence>MVKVANKYAKALFDVSLDTNNLETINEELTVINEAVKDKIEQLKMVDSNPTQTAEQRRELINGVFTDINPYIKNMMYVLADNRHISLIADVFKAFQSLYNGHYNQDFATIESTYELSQEELDKIVKLVTQQTKLSKVIVDTKINPDLIGGFRVKVGTTVLDGSVRNDLVQLQRKFRRVN</sequence>
<dbReference type="EMBL" id="BA000033">
    <property type="protein sequence ID" value="BAB95895.1"/>
    <property type="molecule type" value="Genomic_DNA"/>
</dbReference>
<dbReference type="RefSeq" id="WP_000241344.1">
    <property type="nucleotide sequence ID" value="NC_003923.1"/>
</dbReference>
<dbReference type="SMR" id="P63659"/>
<dbReference type="KEGG" id="sam:MW2030"/>
<dbReference type="HOGENOM" id="CLU_085114_4_1_9"/>
<dbReference type="GO" id="GO:0005886">
    <property type="term" value="C:plasma membrane"/>
    <property type="evidence" value="ECO:0007669"/>
    <property type="project" value="UniProtKB-SubCell"/>
</dbReference>
<dbReference type="GO" id="GO:0045259">
    <property type="term" value="C:proton-transporting ATP synthase complex"/>
    <property type="evidence" value="ECO:0007669"/>
    <property type="project" value="UniProtKB-KW"/>
</dbReference>
<dbReference type="GO" id="GO:0046933">
    <property type="term" value="F:proton-transporting ATP synthase activity, rotational mechanism"/>
    <property type="evidence" value="ECO:0007669"/>
    <property type="project" value="UniProtKB-UniRule"/>
</dbReference>
<dbReference type="Gene3D" id="1.10.520.20">
    <property type="entry name" value="N-terminal domain of the delta subunit of the F1F0-ATP synthase"/>
    <property type="match status" value="1"/>
</dbReference>
<dbReference type="HAMAP" id="MF_01416">
    <property type="entry name" value="ATP_synth_delta_bact"/>
    <property type="match status" value="1"/>
</dbReference>
<dbReference type="InterPro" id="IPR026015">
    <property type="entry name" value="ATP_synth_OSCP/delta_N_sf"/>
</dbReference>
<dbReference type="InterPro" id="IPR020781">
    <property type="entry name" value="ATPase_OSCP/d_CS"/>
</dbReference>
<dbReference type="InterPro" id="IPR000711">
    <property type="entry name" value="ATPase_OSCP/dsu"/>
</dbReference>
<dbReference type="NCBIfam" id="TIGR01145">
    <property type="entry name" value="ATP_synt_delta"/>
    <property type="match status" value="1"/>
</dbReference>
<dbReference type="NCBIfam" id="NF004399">
    <property type="entry name" value="PRK05758.1-1"/>
    <property type="match status" value="1"/>
</dbReference>
<dbReference type="PANTHER" id="PTHR11910">
    <property type="entry name" value="ATP SYNTHASE DELTA CHAIN"/>
    <property type="match status" value="1"/>
</dbReference>
<dbReference type="Pfam" id="PF00213">
    <property type="entry name" value="OSCP"/>
    <property type="match status" value="1"/>
</dbReference>
<dbReference type="PRINTS" id="PR00125">
    <property type="entry name" value="ATPASEDELTA"/>
</dbReference>
<dbReference type="SUPFAM" id="SSF47928">
    <property type="entry name" value="N-terminal domain of the delta subunit of the F1F0-ATP synthase"/>
    <property type="match status" value="1"/>
</dbReference>
<dbReference type="PROSITE" id="PS00389">
    <property type="entry name" value="ATPASE_DELTA"/>
    <property type="match status" value="1"/>
</dbReference>
<proteinExistence type="inferred from homology"/>